<evidence type="ECO:0000255" key="1">
    <source>
        <dbReference type="HAMAP-Rule" id="MF_00107"/>
    </source>
</evidence>
<sequence>MRIGTGYDLHRLVKGRRLVLGGVALPFEKGLDGHSDADVLVHAVCDALLGAAGLGDIGDHFPDTDARFKGVSSLLLLTETGRMLKEKGFFVVNIDATVLAQAPKLGAHKAAMAANMATALGIDAACVNVKATTTEGLDAVGRGEAMAAMSVALIIEEEARDSRGQGAG</sequence>
<dbReference type="EC" id="4.6.1.12" evidence="1"/>
<dbReference type="EMBL" id="CP000859">
    <property type="protein sequence ID" value="ABW67470.1"/>
    <property type="molecule type" value="Genomic_DNA"/>
</dbReference>
<dbReference type="RefSeq" id="WP_012175086.1">
    <property type="nucleotide sequence ID" value="NC_009943.1"/>
</dbReference>
<dbReference type="SMR" id="A9A0H0"/>
<dbReference type="STRING" id="96561.Dole_1666"/>
<dbReference type="KEGG" id="dol:Dole_1666"/>
<dbReference type="eggNOG" id="COG0245">
    <property type="taxonomic scope" value="Bacteria"/>
</dbReference>
<dbReference type="HOGENOM" id="CLU_084630_2_0_7"/>
<dbReference type="OrthoDB" id="9804336at2"/>
<dbReference type="UniPathway" id="UPA00056">
    <property type="reaction ID" value="UER00095"/>
</dbReference>
<dbReference type="Proteomes" id="UP000008561">
    <property type="component" value="Chromosome"/>
</dbReference>
<dbReference type="GO" id="GO:0008685">
    <property type="term" value="F:2-C-methyl-D-erythritol 2,4-cyclodiphosphate synthase activity"/>
    <property type="evidence" value="ECO:0007669"/>
    <property type="project" value="UniProtKB-UniRule"/>
</dbReference>
<dbReference type="GO" id="GO:0046872">
    <property type="term" value="F:metal ion binding"/>
    <property type="evidence" value="ECO:0007669"/>
    <property type="project" value="UniProtKB-KW"/>
</dbReference>
<dbReference type="GO" id="GO:0019288">
    <property type="term" value="P:isopentenyl diphosphate biosynthetic process, methylerythritol 4-phosphate pathway"/>
    <property type="evidence" value="ECO:0007669"/>
    <property type="project" value="UniProtKB-UniRule"/>
</dbReference>
<dbReference type="GO" id="GO:0016114">
    <property type="term" value="P:terpenoid biosynthetic process"/>
    <property type="evidence" value="ECO:0007669"/>
    <property type="project" value="InterPro"/>
</dbReference>
<dbReference type="CDD" id="cd00554">
    <property type="entry name" value="MECDP_synthase"/>
    <property type="match status" value="1"/>
</dbReference>
<dbReference type="FunFam" id="3.30.1330.50:FF:000003">
    <property type="entry name" value="2-C-methyl-D-erythritol 2,4-cyclodiphosphate synthase"/>
    <property type="match status" value="1"/>
</dbReference>
<dbReference type="Gene3D" id="3.30.1330.50">
    <property type="entry name" value="2-C-methyl-D-erythritol 2,4-cyclodiphosphate synthase"/>
    <property type="match status" value="1"/>
</dbReference>
<dbReference type="HAMAP" id="MF_00107">
    <property type="entry name" value="IspF"/>
    <property type="match status" value="1"/>
</dbReference>
<dbReference type="InterPro" id="IPR003526">
    <property type="entry name" value="MECDP_synthase"/>
</dbReference>
<dbReference type="InterPro" id="IPR020555">
    <property type="entry name" value="MECDP_synthase_CS"/>
</dbReference>
<dbReference type="InterPro" id="IPR036571">
    <property type="entry name" value="MECDP_synthase_sf"/>
</dbReference>
<dbReference type="NCBIfam" id="TIGR00151">
    <property type="entry name" value="ispF"/>
    <property type="match status" value="1"/>
</dbReference>
<dbReference type="PANTHER" id="PTHR43181">
    <property type="entry name" value="2-C-METHYL-D-ERYTHRITOL 2,4-CYCLODIPHOSPHATE SYNTHASE, CHLOROPLASTIC"/>
    <property type="match status" value="1"/>
</dbReference>
<dbReference type="PANTHER" id="PTHR43181:SF1">
    <property type="entry name" value="2-C-METHYL-D-ERYTHRITOL 2,4-CYCLODIPHOSPHATE SYNTHASE, CHLOROPLASTIC"/>
    <property type="match status" value="1"/>
</dbReference>
<dbReference type="Pfam" id="PF02542">
    <property type="entry name" value="YgbB"/>
    <property type="match status" value="1"/>
</dbReference>
<dbReference type="SUPFAM" id="SSF69765">
    <property type="entry name" value="IpsF-like"/>
    <property type="match status" value="1"/>
</dbReference>
<dbReference type="PROSITE" id="PS01350">
    <property type="entry name" value="ISPF"/>
    <property type="match status" value="1"/>
</dbReference>
<comment type="function">
    <text evidence="1">Involved in the biosynthesis of isopentenyl diphosphate (IPP) and dimethylallyl diphosphate (DMAPP), two major building blocks of isoprenoid compounds. Catalyzes the conversion of 4-diphosphocytidyl-2-C-methyl-D-erythritol 2-phosphate (CDP-ME2P) to 2-C-methyl-D-erythritol 2,4-cyclodiphosphate (ME-CPP) with a corresponding release of cytidine 5-monophosphate (CMP).</text>
</comment>
<comment type="catalytic activity">
    <reaction evidence="1">
        <text>4-CDP-2-C-methyl-D-erythritol 2-phosphate = 2-C-methyl-D-erythritol 2,4-cyclic diphosphate + CMP</text>
        <dbReference type="Rhea" id="RHEA:23864"/>
        <dbReference type="ChEBI" id="CHEBI:57919"/>
        <dbReference type="ChEBI" id="CHEBI:58483"/>
        <dbReference type="ChEBI" id="CHEBI:60377"/>
        <dbReference type="EC" id="4.6.1.12"/>
    </reaction>
</comment>
<comment type="cofactor">
    <cofactor evidence="1">
        <name>a divalent metal cation</name>
        <dbReference type="ChEBI" id="CHEBI:60240"/>
    </cofactor>
    <text evidence="1">Binds 1 divalent metal cation per subunit.</text>
</comment>
<comment type="pathway">
    <text evidence="1">Isoprenoid biosynthesis; isopentenyl diphosphate biosynthesis via DXP pathway; isopentenyl diphosphate from 1-deoxy-D-xylulose 5-phosphate: step 4/6.</text>
</comment>
<comment type="subunit">
    <text evidence="1">Homotrimer.</text>
</comment>
<comment type="similarity">
    <text evidence="1">Belongs to the IspF family.</text>
</comment>
<keyword id="KW-0414">Isoprene biosynthesis</keyword>
<keyword id="KW-0456">Lyase</keyword>
<keyword id="KW-0479">Metal-binding</keyword>
<keyword id="KW-1185">Reference proteome</keyword>
<gene>
    <name evidence="1" type="primary">ispF</name>
    <name type="ordered locus">Dole_1666</name>
</gene>
<protein>
    <recommendedName>
        <fullName evidence="1">2-C-methyl-D-erythritol 2,4-cyclodiphosphate synthase</fullName>
        <shortName evidence="1">MECDP-synthase</shortName>
        <shortName evidence="1">MECPP-synthase</shortName>
        <shortName evidence="1">MECPS</shortName>
        <ecNumber evidence="1">4.6.1.12</ecNumber>
    </recommendedName>
</protein>
<feature type="chain" id="PRO_1000094258" description="2-C-methyl-D-erythritol 2,4-cyclodiphosphate synthase">
    <location>
        <begin position="1"/>
        <end position="168"/>
    </location>
</feature>
<feature type="binding site" evidence="1">
    <location>
        <begin position="8"/>
        <end position="10"/>
    </location>
    <ligand>
        <name>4-CDP-2-C-methyl-D-erythritol 2-phosphate</name>
        <dbReference type="ChEBI" id="CHEBI:57919"/>
    </ligand>
</feature>
<feature type="binding site" evidence="1">
    <location>
        <position position="8"/>
    </location>
    <ligand>
        <name>a divalent metal cation</name>
        <dbReference type="ChEBI" id="CHEBI:60240"/>
    </ligand>
</feature>
<feature type="binding site" evidence="1">
    <location>
        <position position="10"/>
    </location>
    <ligand>
        <name>a divalent metal cation</name>
        <dbReference type="ChEBI" id="CHEBI:60240"/>
    </ligand>
</feature>
<feature type="binding site" evidence="1">
    <location>
        <begin position="34"/>
        <end position="35"/>
    </location>
    <ligand>
        <name>4-CDP-2-C-methyl-D-erythritol 2-phosphate</name>
        <dbReference type="ChEBI" id="CHEBI:57919"/>
    </ligand>
</feature>
<feature type="binding site" evidence="1">
    <location>
        <position position="42"/>
    </location>
    <ligand>
        <name>a divalent metal cation</name>
        <dbReference type="ChEBI" id="CHEBI:60240"/>
    </ligand>
</feature>
<feature type="binding site" evidence="1">
    <location>
        <begin position="56"/>
        <end position="58"/>
    </location>
    <ligand>
        <name>4-CDP-2-C-methyl-D-erythritol 2-phosphate</name>
        <dbReference type="ChEBI" id="CHEBI:57919"/>
    </ligand>
</feature>
<feature type="binding site" evidence="1">
    <location>
        <begin position="61"/>
        <end position="65"/>
    </location>
    <ligand>
        <name>4-CDP-2-C-methyl-D-erythritol 2-phosphate</name>
        <dbReference type="ChEBI" id="CHEBI:57919"/>
    </ligand>
</feature>
<feature type="binding site" evidence="1">
    <location>
        <begin position="132"/>
        <end position="135"/>
    </location>
    <ligand>
        <name>4-CDP-2-C-methyl-D-erythritol 2-phosphate</name>
        <dbReference type="ChEBI" id="CHEBI:57919"/>
    </ligand>
</feature>
<feature type="binding site" evidence="1">
    <location>
        <position position="142"/>
    </location>
    <ligand>
        <name>4-CDP-2-C-methyl-D-erythritol 2-phosphate</name>
        <dbReference type="ChEBI" id="CHEBI:57919"/>
    </ligand>
</feature>
<feature type="site" description="Transition state stabilizer" evidence="1">
    <location>
        <position position="34"/>
    </location>
</feature>
<feature type="site" description="Transition state stabilizer" evidence="1">
    <location>
        <position position="133"/>
    </location>
</feature>
<name>ISPF_DESOH</name>
<proteinExistence type="inferred from homology"/>
<accession>A9A0H0</accession>
<reference key="1">
    <citation type="submission" date="2007-10" db="EMBL/GenBank/DDBJ databases">
        <title>Complete sequence of Desulfococcus oleovorans Hxd3.</title>
        <authorList>
            <consortium name="US DOE Joint Genome Institute"/>
            <person name="Copeland A."/>
            <person name="Lucas S."/>
            <person name="Lapidus A."/>
            <person name="Barry K."/>
            <person name="Glavina del Rio T."/>
            <person name="Dalin E."/>
            <person name="Tice H."/>
            <person name="Pitluck S."/>
            <person name="Kiss H."/>
            <person name="Brettin T."/>
            <person name="Bruce D."/>
            <person name="Detter J.C."/>
            <person name="Han C."/>
            <person name="Schmutz J."/>
            <person name="Larimer F."/>
            <person name="Land M."/>
            <person name="Hauser L."/>
            <person name="Kyrpides N."/>
            <person name="Kim E."/>
            <person name="Wawrik B."/>
            <person name="Richardson P."/>
        </authorList>
    </citation>
    <scope>NUCLEOTIDE SEQUENCE [LARGE SCALE GENOMIC DNA]</scope>
    <source>
        <strain>DSM 6200 / JCM 39069 / Hxd3</strain>
    </source>
</reference>
<organism>
    <name type="scientific">Desulfosudis oleivorans (strain DSM 6200 / JCM 39069 / Hxd3)</name>
    <name type="common">Desulfococcus oleovorans</name>
    <dbReference type="NCBI Taxonomy" id="96561"/>
    <lineage>
        <taxon>Bacteria</taxon>
        <taxon>Pseudomonadati</taxon>
        <taxon>Thermodesulfobacteriota</taxon>
        <taxon>Desulfobacteria</taxon>
        <taxon>Desulfobacterales</taxon>
        <taxon>Desulfosudaceae</taxon>
        <taxon>Desulfosudis</taxon>
    </lineage>
</organism>